<gene>
    <name evidence="1" type="primary">tig</name>
    <name type="ordered locus">Spy49_1563c</name>
</gene>
<reference key="1">
    <citation type="journal article" date="2008" name="J. Bacteriol.">
        <title>Genome sequence of a nephritogenic and highly transformable M49 strain of Streptococcus pyogenes.</title>
        <authorList>
            <person name="McShan W.M."/>
            <person name="Ferretti J.J."/>
            <person name="Karasawa T."/>
            <person name="Suvorov A.N."/>
            <person name="Lin S."/>
            <person name="Qin B."/>
            <person name="Jia H."/>
            <person name="Kenton S."/>
            <person name="Najar F."/>
            <person name="Wu H."/>
            <person name="Scott J."/>
            <person name="Roe B.A."/>
            <person name="Savic D.J."/>
        </authorList>
    </citation>
    <scope>NUCLEOTIDE SEQUENCE [LARGE SCALE GENOMIC DNA]</scope>
    <source>
        <strain>NZ131</strain>
    </source>
</reference>
<feature type="chain" id="PRO_1000115590" description="Trigger factor">
    <location>
        <begin position="1"/>
        <end position="427"/>
    </location>
</feature>
<feature type="domain" description="PPIase FKBP-type" evidence="1">
    <location>
        <begin position="163"/>
        <end position="248"/>
    </location>
</feature>
<proteinExistence type="inferred from homology"/>
<dbReference type="EC" id="5.2.1.8" evidence="1"/>
<dbReference type="EMBL" id="CP000829">
    <property type="protein sequence ID" value="ACI61823.1"/>
    <property type="molecule type" value="Genomic_DNA"/>
</dbReference>
<dbReference type="SMR" id="B5XIG1"/>
<dbReference type="KEGG" id="soz:Spy49_1563c"/>
<dbReference type="HOGENOM" id="CLU_033058_3_2_9"/>
<dbReference type="Proteomes" id="UP000001039">
    <property type="component" value="Chromosome"/>
</dbReference>
<dbReference type="GO" id="GO:0005737">
    <property type="term" value="C:cytoplasm"/>
    <property type="evidence" value="ECO:0007669"/>
    <property type="project" value="UniProtKB-SubCell"/>
</dbReference>
<dbReference type="GO" id="GO:0003755">
    <property type="term" value="F:peptidyl-prolyl cis-trans isomerase activity"/>
    <property type="evidence" value="ECO:0007669"/>
    <property type="project" value="UniProtKB-UniRule"/>
</dbReference>
<dbReference type="GO" id="GO:0044183">
    <property type="term" value="F:protein folding chaperone"/>
    <property type="evidence" value="ECO:0007669"/>
    <property type="project" value="TreeGrafter"/>
</dbReference>
<dbReference type="GO" id="GO:0043022">
    <property type="term" value="F:ribosome binding"/>
    <property type="evidence" value="ECO:0007669"/>
    <property type="project" value="TreeGrafter"/>
</dbReference>
<dbReference type="GO" id="GO:0051083">
    <property type="term" value="P:'de novo' cotranslational protein folding"/>
    <property type="evidence" value="ECO:0007669"/>
    <property type="project" value="TreeGrafter"/>
</dbReference>
<dbReference type="GO" id="GO:0051301">
    <property type="term" value="P:cell division"/>
    <property type="evidence" value="ECO:0007669"/>
    <property type="project" value="UniProtKB-KW"/>
</dbReference>
<dbReference type="GO" id="GO:0061077">
    <property type="term" value="P:chaperone-mediated protein folding"/>
    <property type="evidence" value="ECO:0007669"/>
    <property type="project" value="TreeGrafter"/>
</dbReference>
<dbReference type="GO" id="GO:0015031">
    <property type="term" value="P:protein transport"/>
    <property type="evidence" value="ECO:0007669"/>
    <property type="project" value="UniProtKB-UniRule"/>
</dbReference>
<dbReference type="GO" id="GO:0043335">
    <property type="term" value="P:protein unfolding"/>
    <property type="evidence" value="ECO:0007669"/>
    <property type="project" value="TreeGrafter"/>
</dbReference>
<dbReference type="FunFam" id="3.10.50.40:FF:000001">
    <property type="entry name" value="Trigger factor"/>
    <property type="match status" value="1"/>
</dbReference>
<dbReference type="Gene3D" id="3.10.50.40">
    <property type="match status" value="1"/>
</dbReference>
<dbReference type="Gene3D" id="3.30.70.1050">
    <property type="entry name" value="Trigger factor ribosome-binding domain"/>
    <property type="match status" value="1"/>
</dbReference>
<dbReference type="Gene3D" id="1.10.3120.10">
    <property type="entry name" value="Trigger factor, C-terminal domain"/>
    <property type="match status" value="1"/>
</dbReference>
<dbReference type="HAMAP" id="MF_00303">
    <property type="entry name" value="Trigger_factor_Tig"/>
    <property type="match status" value="1"/>
</dbReference>
<dbReference type="InterPro" id="IPR046357">
    <property type="entry name" value="PPIase_dom_sf"/>
</dbReference>
<dbReference type="InterPro" id="IPR001179">
    <property type="entry name" value="PPIase_FKBP_dom"/>
</dbReference>
<dbReference type="InterPro" id="IPR005215">
    <property type="entry name" value="Trig_fac"/>
</dbReference>
<dbReference type="InterPro" id="IPR008880">
    <property type="entry name" value="Trigger_fac_C"/>
</dbReference>
<dbReference type="InterPro" id="IPR037041">
    <property type="entry name" value="Trigger_fac_C_sf"/>
</dbReference>
<dbReference type="InterPro" id="IPR008881">
    <property type="entry name" value="Trigger_fac_ribosome-bd_bac"/>
</dbReference>
<dbReference type="InterPro" id="IPR036611">
    <property type="entry name" value="Trigger_fac_ribosome-bd_sf"/>
</dbReference>
<dbReference type="InterPro" id="IPR027304">
    <property type="entry name" value="Trigger_fact/SurA_dom_sf"/>
</dbReference>
<dbReference type="NCBIfam" id="TIGR00115">
    <property type="entry name" value="tig"/>
    <property type="match status" value="1"/>
</dbReference>
<dbReference type="PANTHER" id="PTHR30560">
    <property type="entry name" value="TRIGGER FACTOR CHAPERONE AND PEPTIDYL-PROLYL CIS/TRANS ISOMERASE"/>
    <property type="match status" value="1"/>
</dbReference>
<dbReference type="PANTHER" id="PTHR30560:SF3">
    <property type="entry name" value="TRIGGER FACTOR-LIKE PROTEIN TIG, CHLOROPLASTIC"/>
    <property type="match status" value="1"/>
</dbReference>
<dbReference type="Pfam" id="PF00254">
    <property type="entry name" value="FKBP_C"/>
    <property type="match status" value="1"/>
</dbReference>
<dbReference type="Pfam" id="PF05698">
    <property type="entry name" value="Trigger_C"/>
    <property type="match status" value="1"/>
</dbReference>
<dbReference type="Pfam" id="PF05697">
    <property type="entry name" value="Trigger_N"/>
    <property type="match status" value="1"/>
</dbReference>
<dbReference type="PIRSF" id="PIRSF003095">
    <property type="entry name" value="Trigger_factor"/>
    <property type="match status" value="1"/>
</dbReference>
<dbReference type="SUPFAM" id="SSF54534">
    <property type="entry name" value="FKBP-like"/>
    <property type="match status" value="1"/>
</dbReference>
<dbReference type="SUPFAM" id="SSF109998">
    <property type="entry name" value="Triger factor/SurA peptide-binding domain-like"/>
    <property type="match status" value="1"/>
</dbReference>
<dbReference type="SUPFAM" id="SSF102735">
    <property type="entry name" value="Trigger factor ribosome-binding domain"/>
    <property type="match status" value="1"/>
</dbReference>
<dbReference type="PROSITE" id="PS50059">
    <property type="entry name" value="FKBP_PPIASE"/>
    <property type="match status" value="1"/>
</dbReference>
<evidence type="ECO:0000255" key="1">
    <source>
        <dbReference type="HAMAP-Rule" id="MF_00303"/>
    </source>
</evidence>
<keyword id="KW-0131">Cell cycle</keyword>
<keyword id="KW-0132">Cell division</keyword>
<keyword id="KW-0143">Chaperone</keyword>
<keyword id="KW-0963">Cytoplasm</keyword>
<keyword id="KW-0413">Isomerase</keyword>
<keyword id="KW-0697">Rotamase</keyword>
<name>TIG_STRPZ</name>
<accession>B5XIG1</accession>
<sequence>MSTSFENKATNRGVITFTISQDKIKPALDKAFNKIKKDLNAPGFRKGHMPRPVFNQKFGEEVLYEDALNIVLPEAYEAAVTELGLDVVAQPKIDVVSMEKGKEWTLSAEVVTKPEVKLGDYKNLVVEVDASKEVSDEDVDAKIERERQNLAELIIKDGEAAQGDTVVIDFVGSVDGVEFDAGKGDNFSLELGSGQFIPGFEDQLVGAKAGDEVEVNVTFPESYQAEDLAGKAAKFMTTIHEVKTKEVPELDDELAKDIDEDVDTLEDLKVKYRKELEAAQETSYDDAVEGAAIELAVANAEIVDLPEEMIHEEVNRSVNEFMGNMQRQGISPEMYFQLTGTTQEDLHNPYSAEADKRVKTNLVIEAIAKAEGFEATDSEIEQEINDLATEYNMPADQVRSLLSADMLKHDIAMKKAVEVITSTASVK</sequence>
<organism>
    <name type="scientific">Streptococcus pyogenes serotype M49 (strain NZ131)</name>
    <dbReference type="NCBI Taxonomy" id="471876"/>
    <lineage>
        <taxon>Bacteria</taxon>
        <taxon>Bacillati</taxon>
        <taxon>Bacillota</taxon>
        <taxon>Bacilli</taxon>
        <taxon>Lactobacillales</taxon>
        <taxon>Streptococcaceae</taxon>
        <taxon>Streptococcus</taxon>
    </lineage>
</organism>
<comment type="function">
    <text evidence="1">Involved in protein export. Acts as a chaperone by maintaining the newly synthesized protein in an open conformation. Functions as a peptidyl-prolyl cis-trans isomerase.</text>
</comment>
<comment type="catalytic activity">
    <reaction evidence="1">
        <text>[protein]-peptidylproline (omega=180) = [protein]-peptidylproline (omega=0)</text>
        <dbReference type="Rhea" id="RHEA:16237"/>
        <dbReference type="Rhea" id="RHEA-COMP:10747"/>
        <dbReference type="Rhea" id="RHEA-COMP:10748"/>
        <dbReference type="ChEBI" id="CHEBI:83833"/>
        <dbReference type="ChEBI" id="CHEBI:83834"/>
        <dbReference type="EC" id="5.2.1.8"/>
    </reaction>
</comment>
<comment type="subcellular location">
    <subcellularLocation>
        <location>Cytoplasm</location>
    </subcellularLocation>
    <text evidence="1">About half TF is bound to the ribosome near the polypeptide exit tunnel while the other half is free in the cytoplasm.</text>
</comment>
<comment type="domain">
    <text evidence="1">Consists of 3 domains; the N-terminus binds the ribosome, the middle domain has PPIase activity, while the C-terminus has intrinsic chaperone activity on its own.</text>
</comment>
<comment type="similarity">
    <text evidence="1">Belongs to the FKBP-type PPIase family. Tig subfamily.</text>
</comment>
<protein>
    <recommendedName>
        <fullName evidence="1">Trigger factor</fullName>
        <shortName evidence="1">TF</shortName>
        <ecNumber evidence="1">5.2.1.8</ecNumber>
    </recommendedName>
    <alternativeName>
        <fullName evidence="1">PPIase</fullName>
    </alternativeName>
</protein>